<name>NDHJ_PROMS</name>
<keyword id="KW-0472">Membrane</keyword>
<keyword id="KW-0520">NAD</keyword>
<keyword id="KW-0521">NADP</keyword>
<keyword id="KW-0618">Plastoquinone</keyword>
<keyword id="KW-0874">Quinone</keyword>
<keyword id="KW-0793">Thylakoid</keyword>
<keyword id="KW-1278">Translocase</keyword>
<keyword id="KW-0813">Transport</keyword>
<feature type="chain" id="PRO_0000358164" description="NAD(P)H-quinone oxidoreductase subunit J">
    <location>
        <begin position="1"/>
        <end position="176"/>
    </location>
</feature>
<feature type="region of interest" description="Disordered" evidence="2">
    <location>
        <begin position="1"/>
        <end position="30"/>
    </location>
</feature>
<feature type="compositionally biased region" description="Polar residues" evidence="2">
    <location>
        <begin position="1"/>
        <end position="12"/>
    </location>
</feature>
<feature type="compositionally biased region" description="Polar residues" evidence="2">
    <location>
        <begin position="20"/>
        <end position="30"/>
    </location>
</feature>
<accession>A2BP92</accession>
<organism>
    <name type="scientific">Prochlorococcus marinus (strain AS9601)</name>
    <dbReference type="NCBI Taxonomy" id="146891"/>
    <lineage>
        <taxon>Bacteria</taxon>
        <taxon>Bacillati</taxon>
        <taxon>Cyanobacteriota</taxon>
        <taxon>Cyanophyceae</taxon>
        <taxon>Synechococcales</taxon>
        <taxon>Prochlorococcaceae</taxon>
        <taxon>Prochlorococcus</taxon>
    </lineage>
</organism>
<evidence type="ECO:0000255" key="1">
    <source>
        <dbReference type="HAMAP-Rule" id="MF_01357"/>
    </source>
</evidence>
<evidence type="ECO:0000256" key="2">
    <source>
        <dbReference type="SAM" id="MobiDB-lite"/>
    </source>
</evidence>
<sequence>MEKDSQATSSDTSIEKEGVISQSLSKDGIPNQSLSDDHIGIENISVQPSKLYEAVSALRNYGFNYLQCQGGYDEGPGKNLVSFYHFITVDDFQKIEKIKEVRLKVFLKRDSDLSIPSLYEIFKGSDWQERETFDMYGINFIDHPNPKRLLMPEDWRGWPLRKDYIQPDFYELQDAY</sequence>
<protein>
    <recommendedName>
        <fullName evidence="1">NAD(P)H-quinone oxidoreductase subunit J</fullName>
        <ecNumber evidence="1">7.1.1.-</ecNumber>
    </recommendedName>
    <alternativeName>
        <fullName>NAD(P)H dehydrogenase subunit J</fullName>
    </alternativeName>
    <alternativeName>
        <fullName evidence="1">NADH-plastoquinone oxidoreductase subunit J</fullName>
    </alternativeName>
    <alternativeName>
        <fullName evidence="1">NDH-1 subunit J</fullName>
        <shortName evidence="1">NDH-J</shortName>
    </alternativeName>
</protein>
<proteinExistence type="inferred from homology"/>
<reference key="1">
    <citation type="journal article" date="2007" name="PLoS Genet.">
        <title>Patterns and implications of gene gain and loss in the evolution of Prochlorococcus.</title>
        <authorList>
            <person name="Kettler G.C."/>
            <person name="Martiny A.C."/>
            <person name="Huang K."/>
            <person name="Zucker J."/>
            <person name="Coleman M.L."/>
            <person name="Rodrigue S."/>
            <person name="Chen F."/>
            <person name="Lapidus A."/>
            <person name="Ferriera S."/>
            <person name="Johnson J."/>
            <person name="Steglich C."/>
            <person name="Church G.M."/>
            <person name="Richardson P."/>
            <person name="Chisholm S.W."/>
        </authorList>
    </citation>
    <scope>NUCLEOTIDE SEQUENCE [LARGE SCALE GENOMIC DNA]</scope>
    <source>
        <strain>AS9601</strain>
    </source>
</reference>
<comment type="function">
    <text evidence="1">NDH-1 shuttles electrons from an unknown electron donor, via FMN and iron-sulfur (Fe-S) centers, to quinones in the respiratory and/or the photosynthetic chain. The immediate electron acceptor for the enzyme in this species is believed to be plastoquinone. Couples the redox reaction to proton translocation, and thus conserves the redox energy in a proton gradient. Cyanobacterial NDH-1 also plays a role in inorganic carbon-concentration.</text>
</comment>
<comment type="catalytic activity">
    <reaction evidence="1">
        <text>a plastoquinone + NADH + (n+1) H(+)(in) = a plastoquinol + NAD(+) + n H(+)(out)</text>
        <dbReference type="Rhea" id="RHEA:42608"/>
        <dbReference type="Rhea" id="RHEA-COMP:9561"/>
        <dbReference type="Rhea" id="RHEA-COMP:9562"/>
        <dbReference type="ChEBI" id="CHEBI:15378"/>
        <dbReference type="ChEBI" id="CHEBI:17757"/>
        <dbReference type="ChEBI" id="CHEBI:57540"/>
        <dbReference type="ChEBI" id="CHEBI:57945"/>
        <dbReference type="ChEBI" id="CHEBI:62192"/>
    </reaction>
</comment>
<comment type="catalytic activity">
    <reaction evidence="1">
        <text>a plastoquinone + NADPH + (n+1) H(+)(in) = a plastoquinol + NADP(+) + n H(+)(out)</text>
        <dbReference type="Rhea" id="RHEA:42612"/>
        <dbReference type="Rhea" id="RHEA-COMP:9561"/>
        <dbReference type="Rhea" id="RHEA-COMP:9562"/>
        <dbReference type="ChEBI" id="CHEBI:15378"/>
        <dbReference type="ChEBI" id="CHEBI:17757"/>
        <dbReference type="ChEBI" id="CHEBI:57783"/>
        <dbReference type="ChEBI" id="CHEBI:58349"/>
        <dbReference type="ChEBI" id="CHEBI:62192"/>
    </reaction>
</comment>
<comment type="subunit">
    <text evidence="1">NDH-1 can be composed of about 15 different subunits; different subcomplexes with different compositions have been identified which probably have different functions.</text>
</comment>
<comment type="subcellular location">
    <subcellularLocation>
        <location evidence="1">Cellular thylakoid membrane</location>
        <topology evidence="1">Peripheral membrane protein</topology>
        <orientation evidence="1">Cytoplasmic side</orientation>
    </subcellularLocation>
</comment>
<comment type="similarity">
    <text evidence="1">Belongs to the complex I 30 kDa subunit family.</text>
</comment>
<gene>
    <name evidence="1" type="primary">ndhJ</name>
    <name type="ordered locus">A9601_03151</name>
</gene>
<dbReference type="EC" id="7.1.1.-" evidence="1"/>
<dbReference type="EMBL" id="CP000551">
    <property type="protein sequence ID" value="ABM69603.1"/>
    <property type="molecule type" value="Genomic_DNA"/>
</dbReference>
<dbReference type="RefSeq" id="WP_011817784.1">
    <property type="nucleotide sequence ID" value="NC_008816.1"/>
</dbReference>
<dbReference type="SMR" id="A2BP92"/>
<dbReference type="STRING" id="146891.A9601_03151"/>
<dbReference type="KEGG" id="pmb:A9601_03151"/>
<dbReference type="eggNOG" id="COG0852">
    <property type="taxonomic scope" value="Bacteria"/>
</dbReference>
<dbReference type="HOGENOM" id="CLU_042628_9_1_3"/>
<dbReference type="OrthoDB" id="9803286at2"/>
<dbReference type="Proteomes" id="UP000002590">
    <property type="component" value="Chromosome"/>
</dbReference>
<dbReference type="GO" id="GO:0031676">
    <property type="term" value="C:plasma membrane-derived thylakoid membrane"/>
    <property type="evidence" value="ECO:0007669"/>
    <property type="project" value="UniProtKB-SubCell"/>
</dbReference>
<dbReference type="GO" id="GO:0008137">
    <property type="term" value="F:NADH dehydrogenase (ubiquinone) activity"/>
    <property type="evidence" value="ECO:0007669"/>
    <property type="project" value="InterPro"/>
</dbReference>
<dbReference type="GO" id="GO:0048038">
    <property type="term" value="F:quinone binding"/>
    <property type="evidence" value="ECO:0007669"/>
    <property type="project" value="UniProtKB-KW"/>
</dbReference>
<dbReference type="GO" id="GO:0019684">
    <property type="term" value="P:photosynthesis, light reaction"/>
    <property type="evidence" value="ECO:0007669"/>
    <property type="project" value="UniProtKB-UniRule"/>
</dbReference>
<dbReference type="Gene3D" id="3.30.460.80">
    <property type="entry name" value="NADH:ubiquinone oxidoreductase, 30kDa subunit"/>
    <property type="match status" value="1"/>
</dbReference>
<dbReference type="HAMAP" id="MF_01357">
    <property type="entry name" value="NDH1_NuoC"/>
    <property type="match status" value="1"/>
</dbReference>
<dbReference type="InterPro" id="IPR010218">
    <property type="entry name" value="NADH_DH_suC"/>
</dbReference>
<dbReference type="InterPro" id="IPR037232">
    <property type="entry name" value="NADH_quin_OxRdtase_su_C/D-like"/>
</dbReference>
<dbReference type="InterPro" id="IPR001268">
    <property type="entry name" value="NADH_UbQ_OxRdtase_30kDa_su"/>
</dbReference>
<dbReference type="InterPro" id="IPR020396">
    <property type="entry name" value="NADH_UbQ_OxRdtase_CS"/>
</dbReference>
<dbReference type="NCBIfam" id="NF009141">
    <property type="entry name" value="PRK12494.1"/>
    <property type="match status" value="1"/>
</dbReference>
<dbReference type="PANTHER" id="PTHR10884:SF14">
    <property type="entry name" value="NADH DEHYDROGENASE [UBIQUINONE] IRON-SULFUR PROTEIN 3, MITOCHONDRIAL"/>
    <property type="match status" value="1"/>
</dbReference>
<dbReference type="PANTHER" id="PTHR10884">
    <property type="entry name" value="NADH DEHYDROGENASE UBIQUINONE IRON-SULFUR PROTEIN 3"/>
    <property type="match status" value="1"/>
</dbReference>
<dbReference type="Pfam" id="PF00329">
    <property type="entry name" value="Complex1_30kDa"/>
    <property type="match status" value="1"/>
</dbReference>
<dbReference type="SUPFAM" id="SSF143243">
    <property type="entry name" value="Nqo5-like"/>
    <property type="match status" value="1"/>
</dbReference>
<dbReference type="PROSITE" id="PS00542">
    <property type="entry name" value="COMPLEX1_30K"/>
    <property type="match status" value="1"/>
</dbReference>